<feature type="signal peptide" evidence="3">
    <location>
        <begin position="1"/>
        <end position="36"/>
    </location>
</feature>
<feature type="chain" id="PRO_0000005651" description="Immunoglobulin G-binding protein A">
    <location>
        <begin position="37"/>
        <end position="419"/>
    </location>
</feature>
<feature type="propeptide" id="PRO_0000005652" description="Removed by sortase" evidence="2 4">
    <location>
        <begin position="420"/>
        <end position="450"/>
    </location>
</feature>
<feature type="repeat" description="Immunoglobulin-binding region E" evidence="2">
    <location>
        <begin position="37"/>
        <end position="92"/>
    </location>
</feature>
<feature type="repeat" description="Immunoglobulin-binding region D" evidence="2">
    <location>
        <begin position="93"/>
        <end position="153"/>
    </location>
</feature>
<feature type="repeat" description="Immunoglobulin-binding region A" evidence="2">
    <location>
        <begin position="154"/>
        <end position="211"/>
    </location>
</feature>
<feature type="repeat" description="Immunoglobulin-binding region B/C" evidence="8">
    <location>
        <begin position="212"/>
        <end position="269"/>
    </location>
</feature>
<feature type="repeat" description="2-1">
    <location>
        <begin position="268"/>
        <end position="275"/>
    </location>
</feature>
<feature type="repeat" description="2-2">
    <location>
        <begin position="276"/>
        <end position="283"/>
    </location>
</feature>
<feature type="repeat" description="2-3">
    <location>
        <begin position="284"/>
        <end position="291"/>
    </location>
</feature>
<feature type="repeat" description="2-4">
    <location>
        <begin position="292"/>
        <end position="299"/>
    </location>
</feature>
<feature type="repeat" description="2-5">
    <location>
        <begin position="300"/>
        <end position="307"/>
    </location>
</feature>
<feature type="repeat" description="2-6">
    <location>
        <begin position="308"/>
        <end position="315"/>
    </location>
</feature>
<feature type="repeat" description="2-7">
    <location>
        <begin position="316"/>
        <end position="323"/>
    </location>
</feature>
<feature type="repeat" description="2-8">
    <location>
        <begin position="324"/>
        <end position="331"/>
    </location>
</feature>
<feature type="repeat" description="2-9">
    <location>
        <begin position="332"/>
        <end position="339"/>
    </location>
</feature>
<feature type="repeat" description="2-10">
    <location>
        <begin position="340"/>
        <end position="347"/>
    </location>
</feature>
<feature type="repeat" description="2-11">
    <location>
        <begin position="348"/>
        <end position="355"/>
    </location>
</feature>
<feature type="domain" description="LysM" evidence="5">
    <location>
        <begin position="355"/>
        <end position="399"/>
    </location>
</feature>
<feature type="region of interest" description="Disordered" evidence="6">
    <location>
        <begin position="260"/>
        <end position="365"/>
    </location>
</feature>
<feature type="region of interest" description="12 X 8 AA approximate tandem repeats">
    <location>
        <begin position="268"/>
        <end position="355"/>
    </location>
</feature>
<feature type="region of interest" description="Disordered" evidence="6">
    <location>
        <begin position="401"/>
        <end position="421"/>
    </location>
</feature>
<feature type="short sequence motif" description="YSIRK-G/S signaling motif" evidence="2">
    <location>
        <begin position="7"/>
        <end position="18"/>
    </location>
</feature>
<feature type="short sequence motif" description="LPXTG sorting signal" evidence="4">
    <location>
        <begin position="416"/>
        <end position="420"/>
    </location>
</feature>
<feature type="compositionally biased region" description="Basic and acidic residues" evidence="6">
    <location>
        <begin position="260"/>
        <end position="354"/>
    </location>
</feature>
<feature type="modified residue" description="Pentaglycyl murein peptidoglycan amidated threonine" evidence="4">
    <location>
        <position position="419"/>
    </location>
</feature>
<feature type="helix" evidence="9">
    <location>
        <begin position="31"/>
        <end position="37"/>
    </location>
</feature>
<feature type="helix" evidence="9">
    <location>
        <begin position="43"/>
        <end position="52"/>
    </location>
</feature>
<feature type="strand" evidence="9">
    <location>
        <begin position="54"/>
        <end position="56"/>
    </location>
</feature>
<feature type="helix" evidence="9">
    <location>
        <begin position="58"/>
        <end position="70"/>
    </location>
</feature>
<feature type="helix" evidence="9">
    <location>
        <begin position="72"/>
        <end position="74"/>
    </location>
</feature>
<feature type="helix" evidence="9">
    <location>
        <begin position="75"/>
        <end position="88"/>
    </location>
</feature>
<gene>
    <name type="primary">spa</name>
    <name type="ordered locus">SA0107</name>
</gene>
<evidence type="ECO:0000250" key="1">
    <source>
        <dbReference type="UniProtKB" id="A0A0H3K686"/>
    </source>
</evidence>
<evidence type="ECO:0000250" key="2">
    <source>
        <dbReference type="UniProtKB" id="P02976"/>
    </source>
</evidence>
<evidence type="ECO:0000255" key="3"/>
<evidence type="ECO:0000255" key="4">
    <source>
        <dbReference type="PROSITE-ProRule" id="PRU00477"/>
    </source>
</evidence>
<evidence type="ECO:0000255" key="5">
    <source>
        <dbReference type="PROSITE-ProRule" id="PRU01118"/>
    </source>
</evidence>
<evidence type="ECO:0000256" key="6">
    <source>
        <dbReference type="SAM" id="MobiDB-lite"/>
    </source>
</evidence>
<evidence type="ECO:0000269" key="7">
    <source>
    </source>
</evidence>
<evidence type="ECO:0000305" key="8"/>
<evidence type="ECO:0007829" key="9">
    <source>
        <dbReference type="PDB" id="7RXC"/>
    </source>
</evidence>
<dbReference type="EMBL" id="AB050857">
    <property type="protein sequence ID" value="BAB69825.1"/>
    <property type="molecule type" value="Genomic_DNA"/>
</dbReference>
<dbReference type="EMBL" id="BA000018">
    <property type="protein sequence ID" value="BAB41326.1"/>
    <property type="molecule type" value="Genomic_DNA"/>
</dbReference>
<dbReference type="PIR" id="C89771">
    <property type="entry name" value="C89771"/>
</dbReference>
<dbReference type="RefSeq" id="WP_000728765.1">
    <property type="nucleotide sequence ID" value="NC_002745.2"/>
</dbReference>
<dbReference type="PDB" id="7RXC">
    <property type="method" value="EM"/>
    <property type="resolution" value="3.20 A"/>
    <property type="chains" value="B=43-151"/>
</dbReference>
<dbReference type="PDB" id="7RXD">
    <property type="method" value="EM"/>
    <property type="resolution" value="3.60 A"/>
    <property type="chains" value="B=43-151"/>
</dbReference>
<dbReference type="PDB" id="9BDT">
    <property type="method" value="EM"/>
    <property type="resolution" value="5.40 A"/>
    <property type="chains" value="B=43-151"/>
</dbReference>
<dbReference type="PDB" id="9COO">
    <property type="method" value="EM"/>
    <property type="resolution" value="3.73 A"/>
    <property type="chains" value="B=43-151"/>
</dbReference>
<dbReference type="PDBsum" id="7RXC"/>
<dbReference type="PDBsum" id="7RXD"/>
<dbReference type="PDBsum" id="9BDT"/>
<dbReference type="PDBsum" id="9COO"/>
<dbReference type="SMR" id="P99134"/>
<dbReference type="CAZy" id="CBM50">
    <property type="family name" value="Carbohydrate-Binding Module Family 50"/>
</dbReference>
<dbReference type="ABCD" id="P99134">
    <property type="antibodies" value="1 sequenced antibody"/>
</dbReference>
<dbReference type="EnsemblBacteria" id="BAB41326">
    <property type="protein sequence ID" value="BAB41326"/>
    <property type="gene ID" value="BAB41326"/>
</dbReference>
<dbReference type="KEGG" id="sau:SA0107"/>
<dbReference type="HOGENOM" id="CLU_024983_1_0_9"/>
<dbReference type="PRO" id="PR:P99134"/>
<dbReference type="GO" id="GO:0005576">
    <property type="term" value="C:extracellular region"/>
    <property type="evidence" value="ECO:0007669"/>
    <property type="project" value="UniProtKB-KW"/>
</dbReference>
<dbReference type="GO" id="GO:0019864">
    <property type="term" value="F:IgG binding"/>
    <property type="evidence" value="ECO:0007669"/>
    <property type="project" value="UniProtKB-KW"/>
</dbReference>
<dbReference type="CDD" id="cd00118">
    <property type="entry name" value="LysM"/>
    <property type="match status" value="1"/>
</dbReference>
<dbReference type="FunFam" id="1.20.5.420:FF:000003">
    <property type="entry name" value="Immunoglobulin G-binding protein A"/>
    <property type="match status" value="2"/>
</dbReference>
<dbReference type="Gene3D" id="1.20.5.420">
    <property type="entry name" value="Immunoglobulin FC, subunit C"/>
    <property type="match status" value="4"/>
</dbReference>
<dbReference type="Gene3D" id="3.10.350.10">
    <property type="entry name" value="LysM domain"/>
    <property type="match status" value="1"/>
</dbReference>
<dbReference type="InterPro" id="IPR009063">
    <property type="entry name" value="Ig/albumin-bd_sf"/>
</dbReference>
<dbReference type="InterPro" id="IPR019931">
    <property type="entry name" value="LPXTG_anchor"/>
</dbReference>
<dbReference type="InterPro" id="IPR018392">
    <property type="entry name" value="LysM_dom"/>
</dbReference>
<dbReference type="InterPro" id="IPR036779">
    <property type="entry name" value="LysM_dom_sf"/>
</dbReference>
<dbReference type="InterPro" id="IPR005038">
    <property type="entry name" value="Octapeptide"/>
</dbReference>
<dbReference type="InterPro" id="IPR003132">
    <property type="entry name" value="Protein_A_Ig-bd"/>
</dbReference>
<dbReference type="InterPro" id="IPR005877">
    <property type="entry name" value="YSIRK_signal_dom"/>
</dbReference>
<dbReference type="NCBIfam" id="TIGR01167">
    <property type="entry name" value="LPXTG_anchor"/>
    <property type="match status" value="1"/>
</dbReference>
<dbReference type="NCBIfam" id="TIGR01168">
    <property type="entry name" value="YSIRK_signal"/>
    <property type="match status" value="1"/>
</dbReference>
<dbReference type="Pfam" id="PF02216">
    <property type="entry name" value="B"/>
    <property type="match status" value="4"/>
</dbReference>
<dbReference type="Pfam" id="PF00746">
    <property type="entry name" value="Gram_pos_anchor"/>
    <property type="match status" value="1"/>
</dbReference>
<dbReference type="Pfam" id="PF01476">
    <property type="entry name" value="LysM"/>
    <property type="match status" value="1"/>
</dbReference>
<dbReference type="Pfam" id="PF03373">
    <property type="entry name" value="Octapeptide"/>
    <property type="match status" value="10"/>
</dbReference>
<dbReference type="Pfam" id="PF04650">
    <property type="entry name" value="YSIRK_signal"/>
    <property type="match status" value="1"/>
</dbReference>
<dbReference type="SMART" id="SM00257">
    <property type="entry name" value="LysM"/>
    <property type="match status" value="1"/>
</dbReference>
<dbReference type="SUPFAM" id="SSF46997">
    <property type="entry name" value="Bacterial immunoglobulin/albumin-binding domains"/>
    <property type="match status" value="4"/>
</dbReference>
<dbReference type="SUPFAM" id="SSF54106">
    <property type="entry name" value="LysM domain"/>
    <property type="match status" value="1"/>
</dbReference>
<dbReference type="PROSITE" id="PS50847">
    <property type="entry name" value="GRAM_POS_ANCHORING"/>
    <property type="match status" value="1"/>
</dbReference>
<dbReference type="PROSITE" id="PS51782">
    <property type="entry name" value="LYSM"/>
    <property type="match status" value="1"/>
</dbReference>
<protein>
    <recommendedName>
        <fullName>Immunoglobulin G-binding protein A</fullName>
        <shortName>IgG-binding protein A</shortName>
    </recommendedName>
    <alternativeName>
        <fullName>Staphylococcal protein A</fullName>
        <shortName>SpA</shortName>
    </alternativeName>
</protein>
<name>SPA_STAAN</name>
<accession>P99134</accession>
<accession>Q99XA2</accession>
<keyword id="KW-0002">3D-structure</keyword>
<keyword id="KW-0134">Cell wall</keyword>
<keyword id="KW-0390">IgG-binding protein</keyword>
<keyword id="KW-0572">Peptidoglycan-anchor</keyword>
<keyword id="KW-0677">Repeat</keyword>
<keyword id="KW-0964">Secreted</keyword>
<keyword id="KW-0732">Signal</keyword>
<keyword id="KW-0843">Virulence</keyword>
<proteinExistence type="evidence at protein level"/>
<organism>
    <name type="scientific">Staphylococcus aureus (strain N315)</name>
    <dbReference type="NCBI Taxonomy" id="158879"/>
    <lineage>
        <taxon>Bacteria</taxon>
        <taxon>Bacillati</taxon>
        <taxon>Bacillota</taxon>
        <taxon>Bacilli</taxon>
        <taxon>Bacillales</taxon>
        <taxon>Staphylococcaceae</taxon>
        <taxon>Staphylococcus</taxon>
    </lineage>
</organism>
<comment type="function">
    <text evidence="1 2">Plays a role in the inhibition of the host innate and adaptive immune responses. Possesses five immunoglobulin-binding domains that capture both the fragment crystallizable region (Fc region) and the Fab region (part of Ig that identifies antigen) of immunoglobulins (By similarity). In turn, Staphylococcus aureus is protected from phagocytic killing via inhibition of Ig Fc region. In addition, the host elicited B-cell response is prevented due to a decrease of antibody-secreting cell proliferation that enter the bone marrow, thereby decreasing long-term antibody production. Inhibits osteogenesis by preventing osteoblast proliferation and expression of alkaline phosphatase, type I collagen, osteopontin and osteocalcin. Acts directly as a pro-inflammatory factor in the lung through its ability to bind and activate tumor necrosis factor alpha receptor 1/TNFRSF1A (By similarity).</text>
</comment>
<comment type="subunit">
    <text evidence="1">Interacts with host TNFRSF1A; this interaction leads to the stimulation of both surface expression and shedding of TNFRSF1A.</text>
</comment>
<comment type="subcellular location">
    <subcellularLocation>
        <location evidence="4 7">Secreted</location>
        <location evidence="4 7">Cell wall</location>
        <topology evidence="4 7">Peptidoglycan-anchor</topology>
    </subcellularLocation>
    <text evidence="2 7">Newly synthesized protein is deposited at 2-4 foci/cell and eventually is distributed in a ring around the cell (PubMed:17416657). Anchored to the cell wall by sortase A (By similarity).</text>
</comment>
<comment type="domain">
    <text evidence="2">Each of the immunoglobulin-binding region repeats can bind the Fc region of an immunoglobulin.</text>
</comment>
<comment type="biotechnology">
    <text evidence="8">Important immunodiagnostic reagent because of its ability to bind the Fab and Fc fragments of a wide range of mammalian immunoglobulins.</text>
</comment>
<comment type="miscellaneous">
    <text evidence="8">Unlike many other strains of S.aureus, SpA has only 4 Ig-binding domains in N315.</text>
</comment>
<comment type="similarity">
    <text evidence="8">Belongs to the immunoglobulin-binding protein SpA family.</text>
</comment>
<reference key="1">
    <citation type="submission" date="2000-11" db="EMBL/GenBank/DDBJ databases">
        <title>Identification of differentially expressed genes of Staphylococcus aureus in response to and in raised resistance to imipenem.</title>
        <authorList>
            <person name="Kuroda-Murakami H."/>
            <person name="Kuroda M."/>
            <person name="Hiramatsu K."/>
        </authorList>
    </citation>
    <scope>NUCLEOTIDE SEQUENCE [GENOMIC DNA]</scope>
</reference>
<reference key="2">
    <citation type="journal article" date="2001" name="Lancet">
        <title>Whole genome sequencing of meticillin-resistant Staphylococcus aureus.</title>
        <authorList>
            <person name="Kuroda M."/>
            <person name="Ohta T."/>
            <person name="Uchiyama I."/>
            <person name="Baba T."/>
            <person name="Yuzawa H."/>
            <person name="Kobayashi I."/>
            <person name="Cui L."/>
            <person name="Oguchi A."/>
            <person name="Aoki K."/>
            <person name="Nagai Y."/>
            <person name="Lian J.-Q."/>
            <person name="Ito T."/>
            <person name="Kanamori M."/>
            <person name="Matsumaru H."/>
            <person name="Maruyama A."/>
            <person name="Murakami H."/>
            <person name="Hosoyama A."/>
            <person name="Mizutani-Ui Y."/>
            <person name="Takahashi N.K."/>
            <person name="Sawano T."/>
            <person name="Inoue R."/>
            <person name="Kaito C."/>
            <person name="Sekimizu K."/>
            <person name="Hirakawa H."/>
            <person name="Kuhara S."/>
            <person name="Goto S."/>
            <person name="Yabuzaki J."/>
            <person name="Kanehisa M."/>
            <person name="Yamashita A."/>
            <person name="Oshima K."/>
            <person name="Furuya K."/>
            <person name="Yoshino C."/>
            <person name="Shiba T."/>
            <person name="Hattori M."/>
            <person name="Ogasawara N."/>
            <person name="Hayashi H."/>
            <person name="Hiramatsu K."/>
        </authorList>
    </citation>
    <scope>NUCLEOTIDE SEQUENCE [LARGE SCALE GENOMIC DNA]</scope>
    <source>
        <strain>N315</strain>
    </source>
</reference>
<reference key="3">
    <citation type="journal article" date="2005" name="J. Microbiol. Methods">
        <title>Correlation of proteomic and transcriptomic profiles of Staphylococcus aureus during the post-exponential phase of growth.</title>
        <authorList>
            <person name="Scherl A."/>
            <person name="Francois P."/>
            <person name="Bento M."/>
            <person name="Deshusses J.M."/>
            <person name="Charbonnier Y."/>
            <person name="Converset V."/>
            <person name="Huyghe A."/>
            <person name="Walter N."/>
            <person name="Hoogland C."/>
            <person name="Appel R.D."/>
            <person name="Sanchez J.-C."/>
            <person name="Zimmermann-Ivol C.G."/>
            <person name="Corthals G.L."/>
            <person name="Hochstrasser D.F."/>
            <person name="Schrenzel J."/>
        </authorList>
    </citation>
    <scope>IDENTIFICATION BY MASS SPECTROMETRY</scope>
    <source>
        <strain>N315</strain>
    </source>
</reference>
<reference key="4">
    <citation type="submission" date="2007-10" db="UniProtKB">
        <title>Shotgun proteomic analysis of total and membrane protein extracts of S. aureus strain N315.</title>
        <authorList>
            <person name="Vaezzadeh A.R."/>
            <person name="Deshusses J."/>
            <person name="Lescuyer P."/>
            <person name="Hochstrasser D.F."/>
        </authorList>
    </citation>
    <scope>IDENTIFICATION BY MASS SPECTROMETRY [LARGE SCALE ANALYSIS]</scope>
    <source>
        <strain>N315</strain>
    </source>
</reference>
<reference key="5">
    <citation type="journal article" date="2007" name="J. Bacteriol.">
        <title>Distribution of protein A on the surface of Staphylococcus aureus.</title>
        <authorList>
            <person name="DeDent A.C."/>
            <person name="McAdow M."/>
            <person name="Schneewind O."/>
        </authorList>
    </citation>
    <scope>SUBCELLULAR LOCATION</scope>
    <source>
        <strain>N315</strain>
    </source>
</reference>
<sequence length="450" mass="48873">MKKKNIYSIRKLGVGIASVTLGTLLISGGVTPAANAAQHDEAQQNAFYQVLNMPNLNADQRNGFIQSLKDDPSQSANVLGEAQKLNDSQAPKADAQQNNFNKDQQSAFYEILNMPNLNEAQRNGFIQSLKDDPSQSTNVLGEAKKLNESQAPKADNNFNKEQQNAFYEILNMPNLNEEQRNGFIQSLKDDPSQSANLLSEAKKLNESQAPKADNKFNKEQQNAFYEILHLPNLNEEQRNGFIQSLKDDPSVSKEILAEAKKLNDAQAPKEEDNKKPGKEDGNKPGKEDGNKPGKEDNKKPGKEDGNKPGKEDNNKPGKEDGNKPGKEDNNKPGKEDGNKPGKEDGNKPGKEDGNGVHVVKPGDTVNDIAKANGTTADKIAADNKLADKNMIKPGQELVVDKKQPANHADANKAQALPETGEENPFIGTTVFGGLSLALGAALLAGRRREL</sequence>